<proteinExistence type="inferred from homology"/>
<gene>
    <name evidence="1" type="primary">dnaJ</name>
    <name type="ordered locus">TERTU_3295</name>
</gene>
<organism>
    <name type="scientific">Teredinibacter turnerae (strain ATCC 39867 / T7901)</name>
    <dbReference type="NCBI Taxonomy" id="377629"/>
    <lineage>
        <taxon>Bacteria</taxon>
        <taxon>Pseudomonadati</taxon>
        <taxon>Pseudomonadota</taxon>
        <taxon>Gammaproteobacteria</taxon>
        <taxon>Cellvibrionales</taxon>
        <taxon>Cellvibrionaceae</taxon>
        <taxon>Teredinibacter</taxon>
    </lineage>
</organism>
<reference key="1">
    <citation type="journal article" date="2009" name="PLoS ONE">
        <title>The complete genome of Teredinibacter turnerae T7901: an intracellular endosymbiont of marine wood-boring bivalves (shipworms).</title>
        <authorList>
            <person name="Yang J.C."/>
            <person name="Madupu R."/>
            <person name="Durkin A.S."/>
            <person name="Ekborg N.A."/>
            <person name="Pedamallu C.S."/>
            <person name="Hostetler J.B."/>
            <person name="Radune D."/>
            <person name="Toms B.S."/>
            <person name="Henrissat B."/>
            <person name="Coutinho P.M."/>
            <person name="Schwarz S."/>
            <person name="Field L."/>
            <person name="Trindade-Silva A.E."/>
            <person name="Soares C.A.G."/>
            <person name="Elshahawi S."/>
            <person name="Hanora A."/>
            <person name="Schmidt E.W."/>
            <person name="Haygood M.G."/>
            <person name="Posfai J."/>
            <person name="Benner J."/>
            <person name="Madinger C."/>
            <person name="Nove J."/>
            <person name="Anton B."/>
            <person name="Chaudhary K."/>
            <person name="Foster J."/>
            <person name="Holman A."/>
            <person name="Kumar S."/>
            <person name="Lessard P.A."/>
            <person name="Luyten Y.A."/>
            <person name="Slatko B."/>
            <person name="Wood N."/>
            <person name="Wu B."/>
            <person name="Teplitski M."/>
            <person name="Mougous J.D."/>
            <person name="Ward N."/>
            <person name="Eisen J.A."/>
            <person name="Badger J.H."/>
            <person name="Distel D.L."/>
        </authorList>
    </citation>
    <scope>NUCLEOTIDE SEQUENCE [LARGE SCALE GENOMIC DNA]</scope>
    <source>
        <strain>ATCC 39867 / T7901</strain>
    </source>
</reference>
<protein>
    <recommendedName>
        <fullName evidence="1">Chaperone protein DnaJ</fullName>
    </recommendedName>
</protein>
<dbReference type="EMBL" id="CP001614">
    <property type="protein sequence ID" value="ACR11325.1"/>
    <property type="molecule type" value="Genomic_DNA"/>
</dbReference>
<dbReference type="RefSeq" id="WP_015817437.1">
    <property type="nucleotide sequence ID" value="NC_012997.1"/>
</dbReference>
<dbReference type="SMR" id="C5BQ32"/>
<dbReference type="STRING" id="377629.TERTU_3295"/>
<dbReference type="KEGG" id="ttu:TERTU_3295"/>
<dbReference type="eggNOG" id="COG0484">
    <property type="taxonomic scope" value="Bacteria"/>
</dbReference>
<dbReference type="HOGENOM" id="CLU_017633_0_7_6"/>
<dbReference type="OrthoDB" id="9779889at2"/>
<dbReference type="Proteomes" id="UP000009080">
    <property type="component" value="Chromosome"/>
</dbReference>
<dbReference type="GO" id="GO:0005737">
    <property type="term" value="C:cytoplasm"/>
    <property type="evidence" value="ECO:0007669"/>
    <property type="project" value="UniProtKB-SubCell"/>
</dbReference>
<dbReference type="GO" id="GO:0005524">
    <property type="term" value="F:ATP binding"/>
    <property type="evidence" value="ECO:0007669"/>
    <property type="project" value="InterPro"/>
</dbReference>
<dbReference type="GO" id="GO:0031072">
    <property type="term" value="F:heat shock protein binding"/>
    <property type="evidence" value="ECO:0007669"/>
    <property type="project" value="InterPro"/>
</dbReference>
<dbReference type="GO" id="GO:0051082">
    <property type="term" value="F:unfolded protein binding"/>
    <property type="evidence" value="ECO:0007669"/>
    <property type="project" value="UniProtKB-UniRule"/>
</dbReference>
<dbReference type="GO" id="GO:0008270">
    <property type="term" value="F:zinc ion binding"/>
    <property type="evidence" value="ECO:0007669"/>
    <property type="project" value="UniProtKB-UniRule"/>
</dbReference>
<dbReference type="GO" id="GO:0051085">
    <property type="term" value="P:chaperone cofactor-dependent protein refolding"/>
    <property type="evidence" value="ECO:0007669"/>
    <property type="project" value="TreeGrafter"/>
</dbReference>
<dbReference type="GO" id="GO:0006260">
    <property type="term" value="P:DNA replication"/>
    <property type="evidence" value="ECO:0007669"/>
    <property type="project" value="UniProtKB-KW"/>
</dbReference>
<dbReference type="GO" id="GO:0042026">
    <property type="term" value="P:protein refolding"/>
    <property type="evidence" value="ECO:0007669"/>
    <property type="project" value="TreeGrafter"/>
</dbReference>
<dbReference type="GO" id="GO:0009408">
    <property type="term" value="P:response to heat"/>
    <property type="evidence" value="ECO:0007669"/>
    <property type="project" value="InterPro"/>
</dbReference>
<dbReference type="CDD" id="cd06257">
    <property type="entry name" value="DnaJ"/>
    <property type="match status" value="1"/>
</dbReference>
<dbReference type="CDD" id="cd10747">
    <property type="entry name" value="DnaJ_C"/>
    <property type="match status" value="1"/>
</dbReference>
<dbReference type="CDD" id="cd10719">
    <property type="entry name" value="DnaJ_zf"/>
    <property type="match status" value="1"/>
</dbReference>
<dbReference type="FunFam" id="1.10.287.110:FF:000034">
    <property type="entry name" value="Chaperone protein DnaJ"/>
    <property type="match status" value="1"/>
</dbReference>
<dbReference type="FunFam" id="2.10.230.10:FF:000002">
    <property type="entry name" value="Molecular chaperone DnaJ"/>
    <property type="match status" value="1"/>
</dbReference>
<dbReference type="FunFam" id="2.60.260.20:FF:000004">
    <property type="entry name" value="Molecular chaperone DnaJ"/>
    <property type="match status" value="1"/>
</dbReference>
<dbReference type="Gene3D" id="1.10.287.110">
    <property type="entry name" value="DnaJ domain"/>
    <property type="match status" value="1"/>
</dbReference>
<dbReference type="Gene3D" id="2.10.230.10">
    <property type="entry name" value="Heat shock protein DnaJ, cysteine-rich domain"/>
    <property type="match status" value="1"/>
</dbReference>
<dbReference type="Gene3D" id="2.60.260.20">
    <property type="entry name" value="Urease metallochaperone UreE, N-terminal domain"/>
    <property type="match status" value="2"/>
</dbReference>
<dbReference type="HAMAP" id="MF_01152">
    <property type="entry name" value="DnaJ"/>
    <property type="match status" value="1"/>
</dbReference>
<dbReference type="InterPro" id="IPR012724">
    <property type="entry name" value="DnaJ"/>
</dbReference>
<dbReference type="InterPro" id="IPR002939">
    <property type="entry name" value="DnaJ_C"/>
</dbReference>
<dbReference type="InterPro" id="IPR001623">
    <property type="entry name" value="DnaJ_domain"/>
</dbReference>
<dbReference type="InterPro" id="IPR018253">
    <property type="entry name" value="DnaJ_domain_CS"/>
</dbReference>
<dbReference type="InterPro" id="IPR008971">
    <property type="entry name" value="HSP40/DnaJ_pept-bd"/>
</dbReference>
<dbReference type="InterPro" id="IPR001305">
    <property type="entry name" value="HSP_DnaJ_Cys-rich_dom"/>
</dbReference>
<dbReference type="InterPro" id="IPR036410">
    <property type="entry name" value="HSP_DnaJ_Cys-rich_dom_sf"/>
</dbReference>
<dbReference type="InterPro" id="IPR036869">
    <property type="entry name" value="J_dom_sf"/>
</dbReference>
<dbReference type="NCBIfam" id="TIGR02349">
    <property type="entry name" value="DnaJ_bact"/>
    <property type="match status" value="1"/>
</dbReference>
<dbReference type="NCBIfam" id="NF008035">
    <property type="entry name" value="PRK10767.1"/>
    <property type="match status" value="1"/>
</dbReference>
<dbReference type="PANTHER" id="PTHR43096:SF48">
    <property type="entry name" value="CHAPERONE PROTEIN DNAJ"/>
    <property type="match status" value="1"/>
</dbReference>
<dbReference type="PANTHER" id="PTHR43096">
    <property type="entry name" value="DNAJ HOMOLOG 1, MITOCHONDRIAL-RELATED"/>
    <property type="match status" value="1"/>
</dbReference>
<dbReference type="Pfam" id="PF00226">
    <property type="entry name" value="DnaJ"/>
    <property type="match status" value="1"/>
</dbReference>
<dbReference type="Pfam" id="PF01556">
    <property type="entry name" value="DnaJ_C"/>
    <property type="match status" value="1"/>
</dbReference>
<dbReference type="Pfam" id="PF00684">
    <property type="entry name" value="DnaJ_CXXCXGXG"/>
    <property type="match status" value="1"/>
</dbReference>
<dbReference type="PRINTS" id="PR00625">
    <property type="entry name" value="JDOMAIN"/>
</dbReference>
<dbReference type="SMART" id="SM00271">
    <property type="entry name" value="DnaJ"/>
    <property type="match status" value="1"/>
</dbReference>
<dbReference type="SUPFAM" id="SSF46565">
    <property type="entry name" value="Chaperone J-domain"/>
    <property type="match status" value="1"/>
</dbReference>
<dbReference type="SUPFAM" id="SSF57938">
    <property type="entry name" value="DnaJ/Hsp40 cysteine-rich domain"/>
    <property type="match status" value="1"/>
</dbReference>
<dbReference type="SUPFAM" id="SSF49493">
    <property type="entry name" value="HSP40/DnaJ peptide-binding domain"/>
    <property type="match status" value="2"/>
</dbReference>
<dbReference type="PROSITE" id="PS00636">
    <property type="entry name" value="DNAJ_1"/>
    <property type="match status" value="1"/>
</dbReference>
<dbReference type="PROSITE" id="PS50076">
    <property type="entry name" value="DNAJ_2"/>
    <property type="match status" value="1"/>
</dbReference>
<dbReference type="PROSITE" id="PS51188">
    <property type="entry name" value="ZF_CR"/>
    <property type="match status" value="1"/>
</dbReference>
<name>DNAJ_TERTT</name>
<comment type="function">
    <text evidence="1">Participates actively in the response to hyperosmotic and heat shock by preventing the aggregation of stress-denatured proteins and by disaggregating proteins, also in an autonomous, DnaK-independent fashion. Unfolded proteins bind initially to DnaJ; upon interaction with the DnaJ-bound protein, DnaK hydrolyzes its bound ATP, resulting in the formation of a stable complex. GrpE releases ADP from DnaK; ATP binding to DnaK triggers the release of the substrate protein, thus completing the reaction cycle. Several rounds of ATP-dependent interactions between DnaJ, DnaK and GrpE are required for fully efficient folding. Also involved, together with DnaK and GrpE, in the DNA replication of plasmids through activation of initiation proteins.</text>
</comment>
<comment type="cofactor">
    <cofactor evidence="1">
        <name>Zn(2+)</name>
        <dbReference type="ChEBI" id="CHEBI:29105"/>
    </cofactor>
    <text evidence="1">Binds 2 Zn(2+) ions per monomer.</text>
</comment>
<comment type="subunit">
    <text evidence="1">Homodimer.</text>
</comment>
<comment type="subcellular location">
    <subcellularLocation>
        <location evidence="1">Cytoplasm</location>
    </subcellularLocation>
</comment>
<comment type="domain">
    <text evidence="1">The J domain is necessary and sufficient to stimulate DnaK ATPase activity. Zinc center 1 plays an important role in the autonomous, DnaK-independent chaperone activity of DnaJ. Zinc center 2 is essential for interaction with DnaK and for DnaJ activity.</text>
</comment>
<comment type="similarity">
    <text evidence="1">Belongs to the DnaJ family.</text>
</comment>
<keyword id="KW-0143">Chaperone</keyword>
<keyword id="KW-0963">Cytoplasm</keyword>
<keyword id="KW-0235">DNA replication</keyword>
<keyword id="KW-0479">Metal-binding</keyword>
<keyword id="KW-1185">Reference proteome</keyword>
<keyword id="KW-0677">Repeat</keyword>
<keyword id="KW-0346">Stress response</keyword>
<keyword id="KW-0862">Zinc</keyword>
<keyword id="KW-0863">Zinc-finger</keyword>
<accession>C5BQ32</accession>
<sequence>MAKRDYYEVLGVARDVSEQDLKKAYRKVAMKFHPDRNPDDASAEEKFKEASEAYEVLSDKQKRAAYDQFGHAGVEGQGGMGGGAEGFGSFSDIFGDVFGDIFGGAGGGRGRGGPSRGADLRYTLDLSLEDAVRGTSVKIKVPTLVSCTNCGGSGAKPGTTATTCNTCGGHGQVRMQQGFFSVQQTCPTCRGQGKTISDPCNKCHGHGRVEETKTLSVKVPAGVDTGDRIRLAGEGEAGADGGPSGDLYVQVHVKDHEFFQREGRNLYCEVPISIFDACLGGDLEVPTLDGRVKLKVPAETQTGKLFRLRGKGVTPIRGGAAGDLLCRVIVETPVNLSNKQKELLEQLKDTFKGTQHSPKQQSWFEGMKNFFGDMKM</sequence>
<feature type="chain" id="PRO_1000213692" description="Chaperone protein DnaJ">
    <location>
        <begin position="1"/>
        <end position="376"/>
    </location>
</feature>
<feature type="domain" description="J" evidence="1">
    <location>
        <begin position="5"/>
        <end position="70"/>
    </location>
</feature>
<feature type="repeat" description="CXXCXGXG motif">
    <location>
        <begin position="147"/>
        <end position="154"/>
    </location>
</feature>
<feature type="repeat" description="CXXCXGXG motif">
    <location>
        <begin position="164"/>
        <end position="171"/>
    </location>
</feature>
<feature type="repeat" description="CXXCXGXG motif">
    <location>
        <begin position="186"/>
        <end position="193"/>
    </location>
</feature>
<feature type="repeat" description="CXXCXGXG motif">
    <location>
        <begin position="200"/>
        <end position="207"/>
    </location>
</feature>
<feature type="zinc finger region" description="CR-type" evidence="1">
    <location>
        <begin position="134"/>
        <end position="212"/>
    </location>
</feature>
<feature type="binding site" evidence="1">
    <location>
        <position position="147"/>
    </location>
    <ligand>
        <name>Zn(2+)</name>
        <dbReference type="ChEBI" id="CHEBI:29105"/>
        <label>1</label>
    </ligand>
</feature>
<feature type="binding site" evidence="1">
    <location>
        <position position="150"/>
    </location>
    <ligand>
        <name>Zn(2+)</name>
        <dbReference type="ChEBI" id="CHEBI:29105"/>
        <label>1</label>
    </ligand>
</feature>
<feature type="binding site" evidence="1">
    <location>
        <position position="164"/>
    </location>
    <ligand>
        <name>Zn(2+)</name>
        <dbReference type="ChEBI" id="CHEBI:29105"/>
        <label>2</label>
    </ligand>
</feature>
<feature type="binding site" evidence="1">
    <location>
        <position position="167"/>
    </location>
    <ligand>
        <name>Zn(2+)</name>
        <dbReference type="ChEBI" id="CHEBI:29105"/>
        <label>2</label>
    </ligand>
</feature>
<feature type="binding site" evidence="1">
    <location>
        <position position="186"/>
    </location>
    <ligand>
        <name>Zn(2+)</name>
        <dbReference type="ChEBI" id="CHEBI:29105"/>
        <label>2</label>
    </ligand>
</feature>
<feature type="binding site" evidence="1">
    <location>
        <position position="189"/>
    </location>
    <ligand>
        <name>Zn(2+)</name>
        <dbReference type="ChEBI" id="CHEBI:29105"/>
        <label>2</label>
    </ligand>
</feature>
<feature type="binding site" evidence="1">
    <location>
        <position position="200"/>
    </location>
    <ligand>
        <name>Zn(2+)</name>
        <dbReference type="ChEBI" id="CHEBI:29105"/>
        <label>1</label>
    </ligand>
</feature>
<feature type="binding site" evidence="1">
    <location>
        <position position="203"/>
    </location>
    <ligand>
        <name>Zn(2+)</name>
        <dbReference type="ChEBI" id="CHEBI:29105"/>
        <label>1</label>
    </ligand>
</feature>
<evidence type="ECO:0000255" key="1">
    <source>
        <dbReference type="HAMAP-Rule" id="MF_01152"/>
    </source>
</evidence>